<dbReference type="EC" id="1.1.1.94" evidence="1"/>
<dbReference type="EMBL" id="AL646052">
    <property type="protein sequence ID" value="CAD13885.1"/>
    <property type="molecule type" value="Genomic_DNA"/>
</dbReference>
<dbReference type="RefSeq" id="WP_011000320.1">
    <property type="nucleotide sequence ID" value="NC_003295.1"/>
</dbReference>
<dbReference type="SMR" id="Q8Y2H9"/>
<dbReference type="STRING" id="267608.RSc0357"/>
<dbReference type="EnsemblBacteria" id="CAD13885">
    <property type="protein sequence ID" value="CAD13885"/>
    <property type="gene ID" value="RSc0357"/>
</dbReference>
<dbReference type="KEGG" id="rso:RSc0357"/>
<dbReference type="eggNOG" id="COG0240">
    <property type="taxonomic scope" value="Bacteria"/>
</dbReference>
<dbReference type="HOGENOM" id="CLU_033449_0_2_4"/>
<dbReference type="UniPathway" id="UPA00940"/>
<dbReference type="Proteomes" id="UP000001436">
    <property type="component" value="Chromosome"/>
</dbReference>
<dbReference type="GO" id="GO:0005829">
    <property type="term" value="C:cytosol"/>
    <property type="evidence" value="ECO:0007669"/>
    <property type="project" value="TreeGrafter"/>
</dbReference>
<dbReference type="GO" id="GO:0047952">
    <property type="term" value="F:glycerol-3-phosphate dehydrogenase [NAD(P)+] activity"/>
    <property type="evidence" value="ECO:0007669"/>
    <property type="project" value="UniProtKB-UniRule"/>
</dbReference>
<dbReference type="GO" id="GO:0051287">
    <property type="term" value="F:NAD binding"/>
    <property type="evidence" value="ECO:0007669"/>
    <property type="project" value="InterPro"/>
</dbReference>
<dbReference type="GO" id="GO:0005975">
    <property type="term" value="P:carbohydrate metabolic process"/>
    <property type="evidence" value="ECO:0007669"/>
    <property type="project" value="InterPro"/>
</dbReference>
<dbReference type="GO" id="GO:0046167">
    <property type="term" value="P:glycerol-3-phosphate biosynthetic process"/>
    <property type="evidence" value="ECO:0007669"/>
    <property type="project" value="UniProtKB-UniRule"/>
</dbReference>
<dbReference type="GO" id="GO:0046168">
    <property type="term" value="P:glycerol-3-phosphate catabolic process"/>
    <property type="evidence" value="ECO:0007669"/>
    <property type="project" value="InterPro"/>
</dbReference>
<dbReference type="GO" id="GO:0006650">
    <property type="term" value="P:glycerophospholipid metabolic process"/>
    <property type="evidence" value="ECO:0007669"/>
    <property type="project" value="UniProtKB-UniRule"/>
</dbReference>
<dbReference type="GO" id="GO:0008654">
    <property type="term" value="P:phospholipid biosynthetic process"/>
    <property type="evidence" value="ECO:0007669"/>
    <property type="project" value="UniProtKB-KW"/>
</dbReference>
<dbReference type="FunFam" id="1.10.1040.10:FF:000001">
    <property type="entry name" value="Glycerol-3-phosphate dehydrogenase [NAD(P)+]"/>
    <property type="match status" value="1"/>
</dbReference>
<dbReference type="FunFam" id="3.40.50.720:FF:000019">
    <property type="entry name" value="Glycerol-3-phosphate dehydrogenase [NAD(P)+]"/>
    <property type="match status" value="1"/>
</dbReference>
<dbReference type="Gene3D" id="1.10.1040.10">
    <property type="entry name" value="N-(1-d-carboxylethyl)-l-norvaline Dehydrogenase, domain 2"/>
    <property type="match status" value="1"/>
</dbReference>
<dbReference type="Gene3D" id="3.40.50.720">
    <property type="entry name" value="NAD(P)-binding Rossmann-like Domain"/>
    <property type="match status" value="1"/>
</dbReference>
<dbReference type="HAMAP" id="MF_00394">
    <property type="entry name" value="NAD_Glyc3P_dehydrog"/>
    <property type="match status" value="1"/>
</dbReference>
<dbReference type="InterPro" id="IPR008927">
    <property type="entry name" value="6-PGluconate_DH-like_C_sf"/>
</dbReference>
<dbReference type="InterPro" id="IPR013328">
    <property type="entry name" value="6PGD_dom2"/>
</dbReference>
<dbReference type="InterPro" id="IPR006168">
    <property type="entry name" value="G3P_DH_NAD-dep"/>
</dbReference>
<dbReference type="InterPro" id="IPR006109">
    <property type="entry name" value="G3P_DH_NAD-dep_C"/>
</dbReference>
<dbReference type="InterPro" id="IPR011128">
    <property type="entry name" value="G3P_DH_NAD-dep_N"/>
</dbReference>
<dbReference type="InterPro" id="IPR036291">
    <property type="entry name" value="NAD(P)-bd_dom_sf"/>
</dbReference>
<dbReference type="NCBIfam" id="NF000940">
    <property type="entry name" value="PRK00094.1-2"/>
    <property type="match status" value="1"/>
</dbReference>
<dbReference type="NCBIfam" id="NF000942">
    <property type="entry name" value="PRK00094.1-4"/>
    <property type="match status" value="1"/>
</dbReference>
<dbReference type="PANTHER" id="PTHR11728">
    <property type="entry name" value="GLYCEROL-3-PHOSPHATE DEHYDROGENASE"/>
    <property type="match status" value="1"/>
</dbReference>
<dbReference type="PANTHER" id="PTHR11728:SF1">
    <property type="entry name" value="GLYCEROL-3-PHOSPHATE DEHYDROGENASE [NAD(+)] 2, CHLOROPLASTIC"/>
    <property type="match status" value="1"/>
</dbReference>
<dbReference type="Pfam" id="PF07479">
    <property type="entry name" value="NAD_Gly3P_dh_C"/>
    <property type="match status" value="1"/>
</dbReference>
<dbReference type="Pfam" id="PF01210">
    <property type="entry name" value="NAD_Gly3P_dh_N"/>
    <property type="match status" value="1"/>
</dbReference>
<dbReference type="PIRSF" id="PIRSF000114">
    <property type="entry name" value="Glycerol-3-P_dh"/>
    <property type="match status" value="1"/>
</dbReference>
<dbReference type="PRINTS" id="PR00077">
    <property type="entry name" value="GPDHDRGNASE"/>
</dbReference>
<dbReference type="SUPFAM" id="SSF48179">
    <property type="entry name" value="6-phosphogluconate dehydrogenase C-terminal domain-like"/>
    <property type="match status" value="1"/>
</dbReference>
<dbReference type="SUPFAM" id="SSF51735">
    <property type="entry name" value="NAD(P)-binding Rossmann-fold domains"/>
    <property type="match status" value="1"/>
</dbReference>
<dbReference type="PROSITE" id="PS00957">
    <property type="entry name" value="NAD_G3PDH"/>
    <property type="match status" value="1"/>
</dbReference>
<organism>
    <name type="scientific">Ralstonia nicotianae (strain ATCC BAA-1114 / GMI1000)</name>
    <name type="common">Ralstonia solanacearum</name>
    <dbReference type="NCBI Taxonomy" id="267608"/>
    <lineage>
        <taxon>Bacteria</taxon>
        <taxon>Pseudomonadati</taxon>
        <taxon>Pseudomonadota</taxon>
        <taxon>Betaproteobacteria</taxon>
        <taxon>Burkholderiales</taxon>
        <taxon>Burkholderiaceae</taxon>
        <taxon>Ralstonia</taxon>
        <taxon>Ralstonia solanacearum species complex</taxon>
    </lineage>
</organism>
<protein>
    <recommendedName>
        <fullName evidence="1">Glycerol-3-phosphate dehydrogenase [NAD(P)+]</fullName>
        <ecNumber evidence="1">1.1.1.94</ecNumber>
    </recommendedName>
    <alternativeName>
        <fullName evidence="1">NAD(P)(+)-dependent glycerol-3-phosphate dehydrogenase</fullName>
    </alternativeName>
    <alternativeName>
        <fullName evidence="1">NAD(P)H-dependent dihydroxyacetone-phosphate reductase</fullName>
    </alternativeName>
</protein>
<name>GPDA_RALN1</name>
<comment type="function">
    <text evidence="1">Catalyzes the reduction of the glycolytic intermediate dihydroxyacetone phosphate (DHAP) to sn-glycerol 3-phosphate (G3P), the key precursor for phospholipid synthesis.</text>
</comment>
<comment type="catalytic activity">
    <reaction evidence="1">
        <text>sn-glycerol 3-phosphate + NAD(+) = dihydroxyacetone phosphate + NADH + H(+)</text>
        <dbReference type="Rhea" id="RHEA:11092"/>
        <dbReference type="ChEBI" id="CHEBI:15378"/>
        <dbReference type="ChEBI" id="CHEBI:57540"/>
        <dbReference type="ChEBI" id="CHEBI:57597"/>
        <dbReference type="ChEBI" id="CHEBI:57642"/>
        <dbReference type="ChEBI" id="CHEBI:57945"/>
        <dbReference type="EC" id="1.1.1.94"/>
    </reaction>
    <physiologicalReaction direction="right-to-left" evidence="1">
        <dbReference type="Rhea" id="RHEA:11094"/>
    </physiologicalReaction>
</comment>
<comment type="catalytic activity">
    <reaction evidence="1">
        <text>sn-glycerol 3-phosphate + NADP(+) = dihydroxyacetone phosphate + NADPH + H(+)</text>
        <dbReference type="Rhea" id="RHEA:11096"/>
        <dbReference type="ChEBI" id="CHEBI:15378"/>
        <dbReference type="ChEBI" id="CHEBI:57597"/>
        <dbReference type="ChEBI" id="CHEBI:57642"/>
        <dbReference type="ChEBI" id="CHEBI:57783"/>
        <dbReference type="ChEBI" id="CHEBI:58349"/>
        <dbReference type="EC" id="1.1.1.94"/>
    </reaction>
    <physiologicalReaction direction="right-to-left" evidence="1">
        <dbReference type="Rhea" id="RHEA:11098"/>
    </physiologicalReaction>
</comment>
<comment type="pathway">
    <text evidence="1">Membrane lipid metabolism; glycerophospholipid metabolism.</text>
</comment>
<comment type="subcellular location">
    <subcellularLocation>
        <location evidence="1">Cytoplasm</location>
    </subcellularLocation>
</comment>
<comment type="similarity">
    <text evidence="1">Belongs to the NAD-dependent glycerol-3-phosphate dehydrogenase family.</text>
</comment>
<sequence>MRISVLGAGAWGTALASHAAQSHDVVLWGRDAALVAQMAATRANERYLPGIPLHASLRFEAEMSAALDHATGEDALVVIASPVAGLADLTRGVAAHGGVRNVIWLCKGFDPESGALPHAIVAGVLAQTGRADLATGALSGPSFAKEVAQGLPCAMTVASASTALCTRTQRAFHHHAMRVYASDDLVGVEVGGAVKNVLAIATGAADGLGLGLNARAALVTRGLAEMTRLGTALGGRPETFMGLTGMGDLLLTATGDLSRNRTVGMQLAQGRSLDEILAHLGHVAEGVRCARAVAALARAKGVDMPITFAVCEVLFDGLAPSRAVDRLLQRDAKAESVR</sequence>
<gene>
    <name evidence="1" type="primary">gpsA</name>
    <name type="ordered locus">RSc0357</name>
    <name type="ORF">RS03324</name>
</gene>
<accession>Q8Y2H9</accession>
<keyword id="KW-0963">Cytoplasm</keyword>
<keyword id="KW-0444">Lipid biosynthesis</keyword>
<keyword id="KW-0443">Lipid metabolism</keyword>
<keyword id="KW-0520">NAD</keyword>
<keyword id="KW-0521">NADP</keyword>
<keyword id="KW-0547">Nucleotide-binding</keyword>
<keyword id="KW-0560">Oxidoreductase</keyword>
<keyword id="KW-0594">Phospholipid biosynthesis</keyword>
<keyword id="KW-1208">Phospholipid metabolism</keyword>
<keyword id="KW-1185">Reference proteome</keyword>
<proteinExistence type="inferred from homology"/>
<feature type="chain" id="PRO_0000138012" description="Glycerol-3-phosphate dehydrogenase [NAD(P)+]">
    <location>
        <begin position="1"/>
        <end position="338"/>
    </location>
</feature>
<feature type="active site" description="Proton acceptor" evidence="1">
    <location>
        <position position="195"/>
    </location>
</feature>
<feature type="binding site" evidence="1">
    <location>
        <position position="11"/>
    </location>
    <ligand>
        <name>NADPH</name>
        <dbReference type="ChEBI" id="CHEBI:57783"/>
    </ligand>
</feature>
<feature type="binding site" evidence="1">
    <location>
        <position position="30"/>
    </location>
    <ligand>
        <name>NADPH</name>
        <dbReference type="ChEBI" id="CHEBI:57783"/>
    </ligand>
</feature>
<feature type="binding site" evidence="1">
    <location>
        <position position="107"/>
    </location>
    <ligand>
        <name>NADPH</name>
        <dbReference type="ChEBI" id="CHEBI:57783"/>
    </ligand>
</feature>
<feature type="binding site" evidence="1">
    <location>
        <position position="107"/>
    </location>
    <ligand>
        <name>sn-glycerol 3-phosphate</name>
        <dbReference type="ChEBI" id="CHEBI:57597"/>
    </ligand>
</feature>
<feature type="binding site" evidence="1">
    <location>
        <position position="140"/>
    </location>
    <ligand>
        <name>sn-glycerol 3-phosphate</name>
        <dbReference type="ChEBI" id="CHEBI:57597"/>
    </ligand>
</feature>
<feature type="binding site" evidence="1">
    <location>
        <position position="142"/>
    </location>
    <ligand>
        <name>sn-glycerol 3-phosphate</name>
        <dbReference type="ChEBI" id="CHEBI:57597"/>
    </ligand>
</feature>
<feature type="binding site" evidence="1">
    <location>
        <position position="144"/>
    </location>
    <ligand>
        <name>NADPH</name>
        <dbReference type="ChEBI" id="CHEBI:57783"/>
    </ligand>
</feature>
<feature type="binding site" evidence="1">
    <location>
        <position position="195"/>
    </location>
    <ligand>
        <name>sn-glycerol 3-phosphate</name>
        <dbReference type="ChEBI" id="CHEBI:57597"/>
    </ligand>
</feature>
<feature type="binding site" evidence="1">
    <location>
        <position position="248"/>
    </location>
    <ligand>
        <name>sn-glycerol 3-phosphate</name>
        <dbReference type="ChEBI" id="CHEBI:57597"/>
    </ligand>
</feature>
<feature type="binding site" evidence="1">
    <location>
        <position position="258"/>
    </location>
    <ligand>
        <name>sn-glycerol 3-phosphate</name>
        <dbReference type="ChEBI" id="CHEBI:57597"/>
    </ligand>
</feature>
<feature type="binding site" evidence="1">
    <location>
        <position position="259"/>
    </location>
    <ligand>
        <name>NADPH</name>
        <dbReference type="ChEBI" id="CHEBI:57783"/>
    </ligand>
</feature>
<feature type="binding site" evidence="1">
    <location>
        <position position="259"/>
    </location>
    <ligand>
        <name>sn-glycerol 3-phosphate</name>
        <dbReference type="ChEBI" id="CHEBI:57597"/>
    </ligand>
</feature>
<feature type="binding site" evidence="1">
    <location>
        <position position="260"/>
    </location>
    <ligand>
        <name>sn-glycerol 3-phosphate</name>
        <dbReference type="ChEBI" id="CHEBI:57597"/>
    </ligand>
</feature>
<feature type="binding site" evidence="1">
    <location>
        <position position="283"/>
    </location>
    <ligand>
        <name>NADPH</name>
        <dbReference type="ChEBI" id="CHEBI:57783"/>
    </ligand>
</feature>
<feature type="binding site" evidence="1">
    <location>
        <position position="285"/>
    </location>
    <ligand>
        <name>NADPH</name>
        <dbReference type="ChEBI" id="CHEBI:57783"/>
    </ligand>
</feature>
<evidence type="ECO:0000255" key="1">
    <source>
        <dbReference type="HAMAP-Rule" id="MF_00394"/>
    </source>
</evidence>
<reference key="1">
    <citation type="journal article" date="2002" name="Nature">
        <title>Genome sequence of the plant pathogen Ralstonia solanacearum.</title>
        <authorList>
            <person name="Salanoubat M."/>
            <person name="Genin S."/>
            <person name="Artiguenave F."/>
            <person name="Gouzy J."/>
            <person name="Mangenot S."/>
            <person name="Arlat M."/>
            <person name="Billault A."/>
            <person name="Brottier P."/>
            <person name="Camus J.-C."/>
            <person name="Cattolico L."/>
            <person name="Chandler M."/>
            <person name="Choisne N."/>
            <person name="Claudel-Renard C."/>
            <person name="Cunnac S."/>
            <person name="Demange N."/>
            <person name="Gaspin C."/>
            <person name="Lavie M."/>
            <person name="Moisan A."/>
            <person name="Robert C."/>
            <person name="Saurin W."/>
            <person name="Schiex T."/>
            <person name="Siguier P."/>
            <person name="Thebault P."/>
            <person name="Whalen M."/>
            <person name="Wincker P."/>
            <person name="Levy M."/>
            <person name="Weissenbach J."/>
            <person name="Boucher C.A."/>
        </authorList>
    </citation>
    <scope>NUCLEOTIDE SEQUENCE [LARGE SCALE GENOMIC DNA]</scope>
    <source>
        <strain>ATCC BAA-1114 / GMI1000</strain>
    </source>
</reference>